<name>RGS17_CHICK</name>
<protein>
    <recommendedName>
        <fullName>Regulator of G-protein signaling 17</fullName>
        <shortName>RGS17</shortName>
    </recommendedName>
</protein>
<gene>
    <name type="primary">RGS17</name>
</gene>
<comment type="function">
    <text evidence="1 2">Regulates G protein-coupled receptor signaling cascades, including signaling via muscarinic acetylcholine receptor CHRM2 and dopamine receptor DRD2 (By similarity). Inhibits signal transduction by increasing the GTPase activity of G protein alpha subunits, thereby driving them into their inactive GDP-bound form. Binds selectively to GNAZ and GNAI2 subunits, accelerates their GTPase activity and regulates their signaling activities. Negatively regulates mu-opioid receptor-mediated activation of the G-proteins (By similarity).</text>
</comment>
<comment type="subunit">
    <text evidence="1 2">Interacts with GNAI1 and GNAQ (By similarity). Interacts with GNAZ and GNAI2. Forms a complex with mu-opioid receptors and G(alpha)z/i2 subunits, including GNAZ and GNAI2; the formation of this complex results in mu-opioid receptor desensitization (By similarity).</text>
</comment>
<comment type="subcellular location">
    <subcellularLocation>
        <location evidence="1">Membrane</location>
    </subcellularLocation>
    <subcellularLocation>
        <location evidence="1">Synapse</location>
        <location evidence="1">Synaptosome</location>
    </subcellularLocation>
    <subcellularLocation>
        <location evidence="1">Nucleus</location>
    </subcellularLocation>
    <subcellularLocation>
        <location evidence="1">Cytoplasm</location>
    </subcellularLocation>
</comment>
<comment type="PTM">
    <text evidence="1">N- and O-glycosylated in synapsomal membranes.</text>
</comment>
<comment type="PTM">
    <text evidence="1">Serine phosphorylated in synapsomal membranes.</text>
</comment>
<comment type="PTM">
    <text evidence="1">Sumoylated with SUMO1 and SUM02 in synaptosomes. The sumoylated forms act as a scaffold for sequestering mu-opioid receptor-activated G(alpha) subunits.</text>
</comment>
<keyword id="KW-0963">Cytoplasm</keyword>
<keyword id="KW-0325">Glycoprotein</keyword>
<keyword id="KW-0343">GTPase activation</keyword>
<keyword id="KW-0472">Membrane</keyword>
<keyword id="KW-0539">Nucleus</keyword>
<keyword id="KW-1185">Reference proteome</keyword>
<keyword id="KW-0734">Signal transduction inhibitor</keyword>
<keyword id="KW-0770">Synapse</keyword>
<keyword id="KW-0771">Synaptosome</keyword>
<keyword id="KW-0832">Ubl conjugation</keyword>
<feature type="chain" id="PRO_0000204226" description="Regulator of G-protein signaling 17">
    <location>
        <begin position="1"/>
        <end position="210"/>
    </location>
</feature>
<feature type="domain" description="RGS" evidence="3">
    <location>
        <begin position="84"/>
        <end position="200"/>
    </location>
</feature>
<feature type="region of interest" description="Disordered" evidence="4">
    <location>
        <begin position="1"/>
        <end position="21"/>
    </location>
</feature>
<evidence type="ECO:0000250" key="1">
    <source>
        <dbReference type="UniProtKB" id="Q9QZB0"/>
    </source>
</evidence>
<evidence type="ECO:0000250" key="2">
    <source>
        <dbReference type="UniProtKB" id="Q9UGC6"/>
    </source>
</evidence>
<evidence type="ECO:0000255" key="3">
    <source>
        <dbReference type="PROSITE-ProRule" id="PRU00171"/>
    </source>
</evidence>
<evidence type="ECO:0000256" key="4">
    <source>
        <dbReference type="SAM" id="MobiDB-lite"/>
    </source>
</evidence>
<reference key="1">
    <citation type="journal article" date="1999" name="J. Biol. Chem.">
        <title>Modulation of rap activity by direct interaction of Galpha(o) with Rap1 GTPase-activating protein.</title>
        <authorList>
            <person name="Jordan J.D."/>
            <person name="Carey K.D."/>
            <person name="Stork P.J.S."/>
            <person name="Iyengar R."/>
        </authorList>
    </citation>
    <scope>NUCLEOTIDE SEQUENCE [MRNA]</scope>
    <source>
        <tissue>Spinal ganglion</tissue>
    </source>
</reference>
<proteinExistence type="evidence at transcript level"/>
<organism>
    <name type="scientific">Gallus gallus</name>
    <name type="common">Chicken</name>
    <dbReference type="NCBI Taxonomy" id="9031"/>
    <lineage>
        <taxon>Eukaryota</taxon>
        <taxon>Metazoa</taxon>
        <taxon>Chordata</taxon>
        <taxon>Craniata</taxon>
        <taxon>Vertebrata</taxon>
        <taxon>Euteleostomi</taxon>
        <taxon>Archelosauria</taxon>
        <taxon>Archosauria</taxon>
        <taxon>Dinosauria</taxon>
        <taxon>Saurischia</taxon>
        <taxon>Theropoda</taxon>
        <taxon>Coelurosauria</taxon>
        <taxon>Aves</taxon>
        <taxon>Neognathae</taxon>
        <taxon>Galloanserae</taxon>
        <taxon>Galliformes</taxon>
        <taxon>Phasianidae</taxon>
        <taxon>Phasianinae</taxon>
        <taxon>Gallus</taxon>
    </lineage>
</organism>
<dbReference type="EMBL" id="AF151968">
    <property type="protein sequence ID" value="AAD45948.1"/>
    <property type="molecule type" value="mRNA"/>
</dbReference>
<dbReference type="RefSeq" id="NP_001383078.1">
    <property type="nucleotide sequence ID" value="NM_001396149.1"/>
</dbReference>
<dbReference type="RefSeq" id="NP_990172.1">
    <property type="nucleotide sequence ID" value="NM_204841.3"/>
</dbReference>
<dbReference type="RefSeq" id="XP_046769009.1">
    <property type="nucleotide sequence ID" value="XM_046913053.1"/>
</dbReference>
<dbReference type="RefSeq" id="XP_046769010.1">
    <property type="nucleotide sequence ID" value="XM_046913054.1"/>
</dbReference>
<dbReference type="RefSeq" id="XP_046794415.1">
    <property type="nucleotide sequence ID" value="XM_046938459.1"/>
</dbReference>
<dbReference type="RefSeq" id="XP_046794416.1">
    <property type="nucleotide sequence ID" value="XM_046938460.1"/>
</dbReference>
<dbReference type="SMR" id="Q9PWA0"/>
<dbReference type="FunCoup" id="Q9PWA0">
    <property type="interactions" value="222"/>
</dbReference>
<dbReference type="STRING" id="9031.ENSGALP00000074176"/>
<dbReference type="PaxDb" id="9031-ENSGALP00000043022"/>
<dbReference type="GeneID" id="395645"/>
<dbReference type="KEGG" id="gga:395645"/>
<dbReference type="CTD" id="26575"/>
<dbReference type="VEuPathDB" id="HostDB:geneid_395645"/>
<dbReference type="eggNOG" id="KOG3589">
    <property type="taxonomic scope" value="Eukaryota"/>
</dbReference>
<dbReference type="HOGENOM" id="CLU_059863_0_2_1"/>
<dbReference type="InParanoid" id="Q9PWA0"/>
<dbReference type="OMA" id="MQDNSNA"/>
<dbReference type="OrthoDB" id="10266999at2759"/>
<dbReference type="PhylomeDB" id="Q9PWA0"/>
<dbReference type="TreeFam" id="TF315837"/>
<dbReference type="Reactome" id="R-GGA-416476">
    <property type="pathway name" value="G alpha (q) signalling events"/>
</dbReference>
<dbReference type="Reactome" id="R-GGA-418594">
    <property type="pathway name" value="G alpha (i) signalling events"/>
</dbReference>
<dbReference type="Reactome" id="R-GGA-418597">
    <property type="pathway name" value="G alpha (z) signalling events"/>
</dbReference>
<dbReference type="PRO" id="PR:Q9PWA0"/>
<dbReference type="Proteomes" id="UP000000539">
    <property type="component" value="Chromosome 3"/>
</dbReference>
<dbReference type="Bgee" id="ENSGALG00000026034">
    <property type="expression patterns" value="Expressed in brain and 4 other cell types or tissues"/>
</dbReference>
<dbReference type="GO" id="GO:0005737">
    <property type="term" value="C:cytoplasm"/>
    <property type="evidence" value="ECO:0007669"/>
    <property type="project" value="UniProtKB-SubCell"/>
</dbReference>
<dbReference type="GO" id="GO:0016020">
    <property type="term" value="C:membrane"/>
    <property type="evidence" value="ECO:0007669"/>
    <property type="project" value="UniProtKB-SubCell"/>
</dbReference>
<dbReference type="GO" id="GO:0043005">
    <property type="term" value="C:neuron projection"/>
    <property type="evidence" value="ECO:0007669"/>
    <property type="project" value="UniProtKB-KW"/>
</dbReference>
<dbReference type="GO" id="GO:0005634">
    <property type="term" value="C:nucleus"/>
    <property type="evidence" value="ECO:0007669"/>
    <property type="project" value="UniProtKB-SubCell"/>
</dbReference>
<dbReference type="GO" id="GO:0045202">
    <property type="term" value="C:synapse"/>
    <property type="evidence" value="ECO:0007669"/>
    <property type="project" value="UniProtKB-SubCell"/>
</dbReference>
<dbReference type="GO" id="GO:0005096">
    <property type="term" value="F:GTPase activator activity"/>
    <property type="evidence" value="ECO:0007669"/>
    <property type="project" value="UniProtKB-KW"/>
</dbReference>
<dbReference type="GO" id="GO:0009968">
    <property type="term" value="P:negative regulation of signal transduction"/>
    <property type="evidence" value="ECO:0007669"/>
    <property type="project" value="UniProtKB-KW"/>
</dbReference>
<dbReference type="FunFam" id="1.10.167.10:FF:000015">
    <property type="entry name" value="Regulator of G-protein signaling 17"/>
    <property type="match status" value="1"/>
</dbReference>
<dbReference type="Gene3D" id="1.10.167.10">
    <property type="entry name" value="Regulator of G-protein Signalling 4, domain 2"/>
    <property type="match status" value="1"/>
</dbReference>
<dbReference type="InterPro" id="IPR016137">
    <property type="entry name" value="RGS"/>
</dbReference>
<dbReference type="InterPro" id="IPR036305">
    <property type="entry name" value="RGS_sf"/>
</dbReference>
<dbReference type="InterPro" id="IPR044926">
    <property type="entry name" value="RGS_subdomain_2"/>
</dbReference>
<dbReference type="PANTHER" id="PTHR10845">
    <property type="entry name" value="REGULATOR OF G PROTEIN SIGNALING"/>
    <property type="match status" value="1"/>
</dbReference>
<dbReference type="PANTHER" id="PTHR10845:SF196">
    <property type="entry name" value="REGULATOR OF G-PROTEIN SIGNALING 17"/>
    <property type="match status" value="1"/>
</dbReference>
<dbReference type="Pfam" id="PF00615">
    <property type="entry name" value="RGS"/>
    <property type="match status" value="1"/>
</dbReference>
<dbReference type="PRINTS" id="PR01301">
    <property type="entry name" value="RGSPROTEIN"/>
</dbReference>
<dbReference type="SMART" id="SM00315">
    <property type="entry name" value="RGS"/>
    <property type="match status" value="1"/>
</dbReference>
<dbReference type="SUPFAM" id="SSF48097">
    <property type="entry name" value="Regulator of G-protein signaling, RGS"/>
    <property type="match status" value="1"/>
</dbReference>
<dbReference type="PROSITE" id="PS50132">
    <property type="entry name" value="RGS"/>
    <property type="match status" value="1"/>
</dbReference>
<accession>Q9PWA0</accession>
<sequence>MRKRQQSQNEGTSAVSQAPGNQRPNNTCCFCWCCCCSCSCLTVRNEDRGDNAGRPTHTTKMESIQVIEECQNPTADEILSWAQNFDKMMKTPAGRNLFREFLRTEYSEENLLFWLACEDLKKEQNKKVIEEKARLIYEDYISILSPKEVSLDSRVREVINRNLLDPSPHMYEDAQLQIYTLMHRDSFPRFLNSQIYKSLVESITGSTSET</sequence>